<dbReference type="EC" id="1.14.99.46" evidence="5 7"/>
<dbReference type="EMBL" id="U00096">
    <property type="protein sequence ID" value="AAC74097.1"/>
    <property type="molecule type" value="Genomic_DNA"/>
</dbReference>
<dbReference type="EMBL" id="AP009048">
    <property type="protein sequence ID" value="BAA35789.1"/>
    <property type="molecule type" value="Genomic_DNA"/>
</dbReference>
<dbReference type="PIR" id="B64843">
    <property type="entry name" value="B64843"/>
</dbReference>
<dbReference type="RefSeq" id="NP_415532.3">
    <property type="nucleotide sequence ID" value="NC_000913.3"/>
</dbReference>
<dbReference type="PDB" id="5WAN">
    <property type="method" value="X-ray"/>
    <property type="resolution" value="1.80 A"/>
    <property type="chains" value="A=2-382"/>
</dbReference>
<dbReference type="PDB" id="6SGG">
    <property type="method" value="X-ray"/>
    <property type="resolution" value="1.80 A"/>
    <property type="chains" value="AAA=20-382"/>
</dbReference>
<dbReference type="PDB" id="6SGL">
    <property type="method" value="X-ray"/>
    <property type="resolution" value="2.01 A"/>
    <property type="chains" value="AAA=19-382"/>
</dbReference>
<dbReference type="PDB" id="6SGM">
    <property type="method" value="X-ray"/>
    <property type="resolution" value="2.00 A"/>
    <property type="chains" value="AAA=20-382"/>
</dbReference>
<dbReference type="PDB" id="6SGN">
    <property type="method" value="X-ray"/>
    <property type="resolution" value="2.50 A"/>
    <property type="chains" value="AAA=20-382"/>
</dbReference>
<dbReference type="PDB" id="6TEE">
    <property type="method" value="X-ray"/>
    <property type="resolution" value="2.20 A"/>
    <property type="chains" value="AAA=20-382"/>
</dbReference>
<dbReference type="PDB" id="6TEF">
    <property type="method" value="X-ray"/>
    <property type="resolution" value="1.80 A"/>
    <property type="chains" value="AAA=19-382"/>
</dbReference>
<dbReference type="PDB" id="6TEG">
    <property type="method" value="X-ray"/>
    <property type="resolution" value="1.80 A"/>
    <property type="chains" value="AAA=19-382"/>
</dbReference>
<dbReference type="PDBsum" id="5WAN"/>
<dbReference type="PDBsum" id="6SGG"/>
<dbReference type="PDBsum" id="6SGL"/>
<dbReference type="PDBsum" id="6SGM"/>
<dbReference type="PDBsum" id="6SGN"/>
<dbReference type="PDBsum" id="6TEE"/>
<dbReference type="PDBsum" id="6TEF"/>
<dbReference type="PDBsum" id="6TEG"/>
<dbReference type="SMR" id="P75898"/>
<dbReference type="BioGRID" id="4260038">
    <property type="interactions" value="31"/>
</dbReference>
<dbReference type="FunCoup" id="P75898">
    <property type="interactions" value="162"/>
</dbReference>
<dbReference type="IntAct" id="P75898">
    <property type="interactions" value="7"/>
</dbReference>
<dbReference type="STRING" id="511145.b1012"/>
<dbReference type="PaxDb" id="511145-b1012"/>
<dbReference type="EnsemblBacteria" id="AAC74097">
    <property type="protein sequence ID" value="AAC74097"/>
    <property type="gene ID" value="b1012"/>
</dbReference>
<dbReference type="GeneID" id="945643"/>
<dbReference type="KEGG" id="ecj:JW0997"/>
<dbReference type="KEGG" id="eco:b1012"/>
<dbReference type="PATRIC" id="fig|511145.12.peg.1050"/>
<dbReference type="EchoBASE" id="EB3619"/>
<dbReference type="eggNOG" id="COG2141">
    <property type="taxonomic scope" value="Bacteria"/>
</dbReference>
<dbReference type="HOGENOM" id="CLU_027853_1_1_6"/>
<dbReference type="InParanoid" id="P75898"/>
<dbReference type="OMA" id="ADYNFCF"/>
<dbReference type="PhylomeDB" id="P75898"/>
<dbReference type="BioCyc" id="EcoCyc:G6523-MONOMER"/>
<dbReference type="BioCyc" id="MetaCyc:G6523-MONOMER"/>
<dbReference type="BRENDA" id="1.14.99.46">
    <property type="organism ID" value="2026"/>
</dbReference>
<dbReference type="PRO" id="PR:P75898"/>
<dbReference type="Proteomes" id="UP000000625">
    <property type="component" value="Chromosome"/>
</dbReference>
<dbReference type="GO" id="GO:0008726">
    <property type="term" value="F:alkanesulfonate monooxygenase activity"/>
    <property type="evidence" value="ECO:0000318"/>
    <property type="project" value="GO_Central"/>
</dbReference>
<dbReference type="GO" id="GO:0004497">
    <property type="term" value="F:monooxygenase activity"/>
    <property type="evidence" value="ECO:0000314"/>
    <property type="project" value="UniProtKB"/>
</dbReference>
<dbReference type="GO" id="GO:0052614">
    <property type="term" value="F:uracil oxygenase activity"/>
    <property type="evidence" value="ECO:0000314"/>
    <property type="project" value="CACAO"/>
</dbReference>
<dbReference type="GO" id="GO:0046306">
    <property type="term" value="P:alkanesulfonate catabolic process"/>
    <property type="evidence" value="ECO:0000318"/>
    <property type="project" value="GO_Central"/>
</dbReference>
<dbReference type="GO" id="GO:0019740">
    <property type="term" value="P:nitrogen utilization"/>
    <property type="evidence" value="ECO:0000314"/>
    <property type="project" value="UniProtKB"/>
</dbReference>
<dbReference type="GO" id="GO:0006208">
    <property type="term" value="P:pyrimidine nucleobase catabolic process"/>
    <property type="evidence" value="ECO:0000315"/>
    <property type="project" value="EcoCyc"/>
</dbReference>
<dbReference type="GO" id="GO:0006210">
    <property type="term" value="P:thymine catabolic process"/>
    <property type="evidence" value="ECO:0000314"/>
    <property type="project" value="CACAO"/>
</dbReference>
<dbReference type="GO" id="GO:0006212">
    <property type="term" value="P:uracil catabolic process"/>
    <property type="evidence" value="ECO:0000314"/>
    <property type="project" value="UniProtKB"/>
</dbReference>
<dbReference type="CDD" id="cd01094">
    <property type="entry name" value="Alkanesulfonate_monoxygenase"/>
    <property type="match status" value="1"/>
</dbReference>
<dbReference type="FunFam" id="3.20.20.30:FF:000003">
    <property type="entry name" value="Pyrimidine monooxygenase RutA"/>
    <property type="match status" value="1"/>
</dbReference>
<dbReference type="Gene3D" id="3.20.20.30">
    <property type="entry name" value="Luciferase-like domain"/>
    <property type="match status" value="1"/>
</dbReference>
<dbReference type="HAMAP" id="MF_01699">
    <property type="entry name" value="RutA"/>
    <property type="match status" value="1"/>
</dbReference>
<dbReference type="InterPro" id="IPR011251">
    <property type="entry name" value="Luciferase-like_dom"/>
</dbReference>
<dbReference type="InterPro" id="IPR036661">
    <property type="entry name" value="Luciferase-like_sf"/>
</dbReference>
<dbReference type="InterPro" id="IPR019914">
    <property type="entry name" value="Pyrimidine_monooxygenase_RutA"/>
</dbReference>
<dbReference type="InterPro" id="IPR050172">
    <property type="entry name" value="SsuD_RutA_monooxygenase"/>
</dbReference>
<dbReference type="NCBIfam" id="TIGR03612">
    <property type="entry name" value="RutA"/>
    <property type="match status" value="1"/>
</dbReference>
<dbReference type="PANTHER" id="PTHR42847">
    <property type="entry name" value="ALKANESULFONATE MONOOXYGENASE"/>
    <property type="match status" value="1"/>
</dbReference>
<dbReference type="PANTHER" id="PTHR42847:SF4">
    <property type="entry name" value="ALKANESULFONATE MONOOXYGENASE-RELATED"/>
    <property type="match status" value="1"/>
</dbReference>
<dbReference type="Pfam" id="PF00296">
    <property type="entry name" value="Bac_luciferase"/>
    <property type="match status" value="1"/>
</dbReference>
<dbReference type="SUPFAM" id="SSF51679">
    <property type="entry name" value="Bacterial luciferase-like"/>
    <property type="match status" value="1"/>
</dbReference>
<reference key="1">
    <citation type="journal article" date="1996" name="DNA Res.">
        <title>A 718-kb DNA sequence of the Escherichia coli K-12 genome corresponding to the 12.7-28.0 min region on the linkage map.</title>
        <authorList>
            <person name="Oshima T."/>
            <person name="Aiba H."/>
            <person name="Baba T."/>
            <person name="Fujita K."/>
            <person name="Hayashi K."/>
            <person name="Honjo A."/>
            <person name="Ikemoto K."/>
            <person name="Inada T."/>
            <person name="Itoh T."/>
            <person name="Kajihara M."/>
            <person name="Kanai K."/>
            <person name="Kashimoto K."/>
            <person name="Kimura S."/>
            <person name="Kitagawa M."/>
            <person name="Makino K."/>
            <person name="Masuda S."/>
            <person name="Miki T."/>
            <person name="Mizobuchi K."/>
            <person name="Mori H."/>
            <person name="Motomura K."/>
            <person name="Nakamura Y."/>
            <person name="Nashimoto H."/>
            <person name="Nishio Y."/>
            <person name="Saito N."/>
            <person name="Sampei G."/>
            <person name="Seki Y."/>
            <person name="Tagami H."/>
            <person name="Takemoto K."/>
            <person name="Wada C."/>
            <person name="Yamamoto Y."/>
            <person name="Yano M."/>
            <person name="Horiuchi T."/>
        </authorList>
    </citation>
    <scope>NUCLEOTIDE SEQUENCE [LARGE SCALE GENOMIC DNA]</scope>
    <source>
        <strain>K12 / W3110 / ATCC 27325 / DSM 5911</strain>
    </source>
</reference>
<reference key="2">
    <citation type="journal article" date="1997" name="Science">
        <title>The complete genome sequence of Escherichia coli K-12.</title>
        <authorList>
            <person name="Blattner F.R."/>
            <person name="Plunkett G. III"/>
            <person name="Bloch C.A."/>
            <person name="Perna N.T."/>
            <person name="Burland V."/>
            <person name="Riley M."/>
            <person name="Collado-Vides J."/>
            <person name="Glasner J.D."/>
            <person name="Rode C.K."/>
            <person name="Mayhew G.F."/>
            <person name="Gregor J."/>
            <person name="Davis N.W."/>
            <person name="Kirkpatrick H.A."/>
            <person name="Goeden M.A."/>
            <person name="Rose D.J."/>
            <person name="Mau B."/>
            <person name="Shao Y."/>
        </authorList>
    </citation>
    <scope>NUCLEOTIDE SEQUENCE [LARGE SCALE GENOMIC DNA]</scope>
    <source>
        <strain>K12 / MG1655 / ATCC 47076</strain>
    </source>
</reference>
<reference key="3">
    <citation type="journal article" date="2006" name="Mol. Syst. Biol.">
        <title>Highly accurate genome sequences of Escherichia coli K-12 strains MG1655 and W3110.</title>
        <authorList>
            <person name="Hayashi K."/>
            <person name="Morooka N."/>
            <person name="Yamamoto Y."/>
            <person name="Fujita K."/>
            <person name="Isono K."/>
            <person name="Choi S."/>
            <person name="Ohtsubo E."/>
            <person name="Baba T."/>
            <person name="Wanner B.L."/>
            <person name="Mori H."/>
            <person name="Horiuchi T."/>
        </authorList>
    </citation>
    <scope>NUCLEOTIDE SEQUENCE [LARGE SCALE GENOMIC DNA]</scope>
    <source>
        <strain>K12 / W3110 / ATCC 27325 / DSM 5911</strain>
    </source>
</reference>
<reference key="4">
    <citation type="journal article" date="2000" name="Proc. Natl. Acad. Sci. U.S.A.">
        <title>Nitrogen regulatory protein C-controlled genes of Escherichia coli: scavenging as a defense against nitrogen limitation.</title>
        <authorList>
            <person name="Zimmer D.P."/>
            <person name="Soupene E."/>
            <person name="Lee H.L."/>
            <person name="Wendisch V.F."/>
            <person name="Khodursky A.B."/>
            <person name="Peter B.J."/>
            <person name="Bender R.A."/>
            <person name="Kustu S."/>
        </authorList>
    </citation>
    <scope>INDUCTION</scope>
</reference>
<reference key="5">
    <citation type="journal article" date="2006" name="Proc. Natl. Acad. Sci. U.S.A.">
        <title>A previously undescribed pathway for pyrimidine catabolism.</title>
        <authorList>
            <person name="Loh K.D."/>
            <person name="Gyaneshwar P."/>
            <person name="Markenscoff Papadimitriou E."/>
            <person name="Fong R."/>
            <person name="Kim K.-S."/>
            <person name="Parales R."/>
            <person name="Zhou Z."/>
            <person name="Inwood W."/>
            <person name="Kustu S."/>
        </authorList>
    </citation>
    <scope>FUNCTION IN PYRIMIDINE CATABOLISM</scope>
    <scope>SUBSTRATE SPECIFICITY</scope>
    <scope>DISRUPTION PHENOTYPE</scope>
    <scope>NOMENCLATURE</scope>
    <source>
        <strain>K12 / MG1655 / ATCC 47076</strain>
    </source>
</reference>
<reference key="6">
    <citation type="journal article" date="2007" name="Mol. Microbiol.">
        <title>RutR is the uracil/thymine-sensing master regulator of a set of genes for synthesis and degradation of pyrimidines.</title>
        <authorList>
            <person name="Shimada T."/>
            <person name="Hirao K."/>
            <person name="Kori A."/>
            <person name="Yamamoto K."/>
            <person name="Ishihama A."/>
        </authorList>
    </citation>
    <scope>INDUCTION</scope>
</reference>
<reference key="7">
    <citation type="journal article" date="2010" name="J. Bacteriol.">
        <title>The Rut pathway for pyrimidine degradation: novel chemistry and toxicity problems.</title>
        <authorList>
            <person name="Kim K.S."/>
            <person name="Pelton J.G."/>
            <person name="Inwood W.B."/>
            <person name="Andersen U."/>
            <person name="Kustu S."/>
            <person name="Wemmer D.E."/>
        </authorList>
    </citation>
    <scope>FUNCTION AS A PYRIMIDINE OXYGENASE</scope>
</reference>
<reference key="8">
    <citation type="journal article" date="2017" name="Biochemistry">
        <title>RutA-Catalyzed Oxidative Cleavage of the Uracil Amide Involves Formation of a Flavin-N5-oxide.</title>
        <authorList>
            <person name="Adak S."/>
            <person name="Begley T.P."/>
        </authorList>
    </citation>
    <scope>FUNCTION</scope>
    <scope>CATALYTIC ACTIVITY</scope>
    <scope>REACTION MECHANISM</scope>
</reference>
<reference key="9">
    <citation type="journal article" date="2010" name="J. Am. Chem. Soc.">
        <title>Catalysis of a flavoenzyme-mediated amide hydrolysis.</title>
        <authorList>
            <person name="Mukherjee T."/>
            <person name="Zhang Y."/>
            <person name="Abdelwahed S."/>
            <person name="Ealick S.E."/>
            <person name="Begley T.P."/>
        </authorList>
    </citation>
    <scope>X-RAY CRYSTALLOGRAPHY (2.5 ANGSTROMS) IN COMPLEX WITH FMN</scope>
    <scope>CATALYTIC ACTIVITY</scope>
</reference>
<comment type="function">
    <text evidence="3 6 7">Catalyzes the pyrimidine ring opening between N-3 and C-4 by an unusual flavin hydroperoxide-catalyzed mechanism, adding oxygen atoms in the process to yield ureidoacrylate peracid, that immediately reacts with FMN forming ureidoacrylate and FMN-N(5)-oxide. The FMN-N(5)-oxide reacts spontaneously with NADH to produce FMN. Requires the flavin reductase RutF to regenerate FMN in vivo. RutF can be substituted by Fre in vitro.</text>
</comment>
<comment type="catalytic activity">
    <reaction evidence="5 7">
        <text>uracil + FMNH2 + NADH + O2 = (Z)-3-ureidoacrylate + FMN + NAD(+) + H2O + H(+)</text>
        <dbReference type="Rhea" id="RHEA:31587"/>
        <dbReference type="ChEBI" id="CHEBI:15377"/>
        <dbReference type="ChEBI" id="CHEBI:15378"/>
        <dbReference type="ChEBI" id="CHEBI:15379"/>
        <dbReference type="ChEBI" id="CHEBI:17568"/>
        <dbReference type="ChEBI" id="CHEBI:57540"/>
        <dbReference type="ChEBI" id="CHEBI:57618"/>
        <dbReference type="ChEBI" id="CHEBI:57945"/>
        <dbReference type="ChEBI" id="CHEBI:58210"/>
        <dbReference type="ChEBI" id="CHEBI:59891"/>
        <dbReference type="EC" id="1.14.99.46"/>
    </reaction>
</comment>
<comment type="catalytic activity">
    <reaction evidence="5 7">
        <text>thymine + FMNH2 + NADH + O2 = (Z)-2-methylureidoacrylate + FMN + NAD(+) + H2O + H(+)</text>
        <dbReference type="Rhea" id="RHEA:31599"/>
        <dbReference type="ChEBI" id="CHEBI:15377"/>
        <dbReference type="ChEBI" id="CHEBI:15378"/>
        <dbReference type="ChEBI" id="CHEBI:15379"/>
        <dbReference type="ChEBI" id="CHEBI:17821"/>
        <dbReference type="ChEBI" id="CHEBI:57540"/>
        <dbReference type="ChEBI" id="CHEBI:57618"/>
        <dbReference type="ChEBI" id="CHEBI:57945"/>
        <dbReference type="ChEBI" id="CHEBI:58210"/>
        <dbReference type="ChEBI" id="CHEBI:143783"/>
        <dbReference type="EC" id="1.14.99.46"/>
    </reaction>
</comment>
<comment type="induction">
    <text evidence="2 4">Up-regulated by the nitrogen regulatory protein C (NtrC also called GlnG) and repressed by RutR.</text>
</comment>
<comment type="disruption phenotype">
    <text evidence="3">Cells lacking this gene lose the ability to utilize pyrimidine nucleosides and bases as the sole source of nitrogen at room temperature.</text>
</comment>
<comment type="miscellaneous">
    <text>The Rut pathway degrades exogenous pyrimidines as the sole nitrogen source at room temperature but not at 37 degrees Celsius, a restriction that is apparently a consequence of an inadequate ability to remove toxic malonic semialdehyde at the higher temperature (RutE/YdfG function).</text>
</comment>
<comment type="similarity">
    <text evidence="8">Belongs to the NtaA/SnaA/DszA monooxygenase family. RutA subfamily.</text>
</comment>
<organism>
    <name type="scientific">Escherichia coli (strain K12)</name>
    <dbReference type="NCBI Taxonomy" id="83333"/>
    <lineage>
        <taxon>Bacteria</taxon>
        <taxon>Pseudomonadati</taxon>
        <taxon>Pseudomonadota</taxon>
        <taxon>Gammaproteobacteria</taxon>
        <taxon>Enterobacterales</taxon>
        <taxon>Enterobacteriaceae</taxon>
        <taxon>Escherichia</taxon>
    </lineage>
</organism>
<name>RUTA_ECOLI</name>
<protein>
    <recommendedName>
        <fullName>Pyrimidine monooxygenase RutA</fullName>
        <ecNumber evidence="5 7">1.14.99.46</ecNumber>
    </recommendedName>
</protein>
<proteinExistence type="evidence at protein level"/>
<accession>P75898</accession>
<evidence type="ECO:0000255" key="1"/>
<evidence type="ECO:0000269" key="2">
    <source>
    </source>
</evidence>
<evidence type="ECO:0000269" key="3">
    <source>
    </source>
</evidence>
<evidence type="ECO:0000269" key="4">
    <source>
    </source>
</evidence>
<evidence type="ECO:0000269" key="5">
    <source>
    </source>
</evidence>
<evidence type="ECO:0000269" key="6">
    <source>
    </source>
</evidence>
<evidence type="ECO:0000269" key="7">
    <source>
    </source>
</evidence>
<evidence type="ECO:0000305" key="8"/>
<evidence type="ECO:0007829" key="9">
    <source>
        <dbReference type="PDB" id="5WAN"/>
    </source>
</evidence>
<feature type="chain" id="PRO_0000168802" description="Pyrimidine monooxygenase RutA">
    <location>
        <begin position="1"/>
        <end position="382"/>
    </location>
</feature>
<feature type="binding site" evidence="1">
    <location>
        <begin position="68"/>
        <end position="69"/>
    </location>
    <ligand>
        <name>FMN</name>
        <dbReference type="ChEBI" id="CHEBI:58210"/>
    </ligand>
</feature>
<feature type="binding site" evidence="1">
    <location>
        <position position="134"/>
    </location>
    <ligand>
        <name>FMN</name>
        <dbReference type="ChEBI" id="CHEBI:58210"/>
    </ligand>
</feature>
<feature type="binding site" evidence="1">
    <location>
        <position position="143"/>
    </location>
    <ligand>
        <name>FMN</name>
        <dbReference type="ChEBI" id="CHEBI:58210"/>
    </ligand>
</feature>
<feature type="binding site" evidence="1">
    <location>
        <begin position="159"/>
        <end position="160"/>
    </location>
    <ligand>
        <name>FMN</name>
        <dbReference type="ChEBI" id="CHEBI:58210"/>
    </ligand>
</feature>
<feature type="binding site" evidence="1">
    <location>
        <position position="209"/>
    </location>
    <ligand>
        <name>FMN</name>
        <dbReference type="ChEBI" id="CHEBI:58210"/>
    </ligand>
</feature>
<feature type="strand" evidence="9">
    <location>
        <begin position="21"/>
        <end position="25"/>
    </location>
</feature>
<feature type="turn" evidence="9">
    <location>
        <begin position="30"/>
        <end position="33"/>
    </location>
</feature>
<feature type="helix" evidence="9">
    <location>
        <begin position="46"/>
        <end position="58"/>
    </location>
</feature>
<feature type="strand" evidence="9">
    <location>
        <begin position="63"/>
        <end position="65"/>
    </location>
</feature>
<feature type="turn" evidence="9">
    <location>
        <begin position="75"/>
        <end position="81"/>
    </location>
</feature>
<feature type="helix" evidence="9">
    <location>
        <begin position="86"/>
        <end position="95"/>
    </location>
</feature>
<feature type="strand" evidence="9">
    <location>
        <begin position="98"/>
        <end position="107"/>
    </location>
</feature>
<feature type="turn" evidence="9">
    <location>
        <begin position="108"/>
        <end position="110"/>
    </location>
</feature>
<feature type="helix" evidence="9">
    <location>
        <begin position="113"/>
        <end position="127"/>
    </location>
</feature>
<feature type="strand" evidence="9">
    <location>
        <begin position="131"/>
        <end position="136"/>
    </location>
</feature>
<feature type="helix" evidence="9">
    <location>
        <begin position="141"/>
        <end position="145"/>
    </location>
</feature>
<feature type="turn" evidence="9">
    <location>
        <begin position="146"/>
        <end position="148"/>
    </location>
</feature>
<feature type="helix" evidence="9">
    <location>
        <begin position="155"/>
        <end position="176"/>
    </location>
</feature>
<feature type="strand" evidence="9">
    <location>
        <begin position="177"/>
        <end position="179"/>
    </location>
</feature>
<feature type="strand" evidence="9">
    <location>
        <begin position="189"/>
        <end position="192"/>
    </location>
</feature>
<feature type="strand" evidence="9">
    <location>
        <begin position="202"/>
        <end position="205"/>
    </location>
</feature>
<feature type="helix" evidence="9">
    <location>
        <begin position="210"/>
        <end position="219"/>
    </location>
</feature>
<feature type="strand" evidence="9">
    <location>
        <begin position="221"/>
        <end position="226"/>
    </location>
</feature>
<feature type="strand" evidence="9">
    <location>
        <begin position="229"/>
        <end position="231"/>
    </location>
</feature>
<feature type="turn" evidence="9">
    <location>
        <begin position="233"/>
        <end position="236"/>
    </location>
</feature>
<feature type="helix" evidence="9">
    <location>
        <begin position="237"/>
        <end position="248"/>
    </location>
</feature>
<feature type="turn" evidence="9">
    <location>
        <begin position="249"/>
        <end position="251"/>
    </location>
</feature>
<feature type="strand" evidence="9">
    <location>
        <begin position="255"/>
        <end position="267"/>
    </location>
</feature>
<feature type="helix" evidence="9">
    <location>
        <begin position="268"/>
        <end position="280"/>
    </location>
</feature>
<feature type="helix" evidence="9">
    <location>
        <begin position="284"/>
        <end position="290"/>
    </location>
</feature>
<feature type="helix" evidence="9">
    <location>
        <begin position="315"/>
        <end position="317"/>
    </location>
</feature>
<feature type="strand" evidence="9">
    <location>
        <begin position="322"/>
        <end position="326"/>
    </location>
</feature>
<feature type="helix" evidence="9">
    <location>
        <begin position="327"/>
        <end position="338"/>
    </location>
</feature>
<feature type="strand" evidence="9">
    <location>
        <begin position="343"/>
        <end position="352"/>
    </location>
</feature>
<feature type="helix" evidence="9">
    <location>
        <begin position="353"/>
        <end position="363"/>
    </location>
</feature>
<feature type="helix" evidence="9">
    <location>
        <begin position="365"/>
        <end position="367"/>
    </location>
</feature>
<feature type="helix" evidence="9">
    <location>
        <begin position="369"/>
        <end position="371"/>
    </location>
</feature>
<sequence>MQDAAPRLTFTLRDEERLMMKIGVFVPIGNNGWLISTHAPQYMPTFELNKAIVQKAEHYHFDFALSMIKLRGFGGKTEFWDHNLESFTLMAGLAAVTSRIQIYATAATLTLPPAIVARMAATIDSISGGRFGVNLVTGWQKPEYEQMGIWPGDDYFSRRYDYLTEYVQVLRDLWGTGKSDFKGDFFTMNDCRVSPQPSVPMKVICAGQSDAGMAFSARYADFNFCFGKGVNTPTAFAPTAARMKQAAEQTGRDVGSYVLFMVIADETDDAARAKWEHYKAGADEEALSWLTEQSQKDTRSGTDTNVRQMADPTSAVNINMGTLVGSYASVARMLDEVASVPGAEGVLLTFDDFLSGIETFGERIQPLMQCRAHLPALTQEVA</sequence>
<keyword id="KW-0002">3D-structure</keyword>
<keyword id="KW-0285">Flavoprotein</keyword>
<keyword id="KW-0288">FMN</keyword>
<keyword id="KW-0503">Monooxygenase</keyword>
<keyword id="KW-0521">NADP</keyword>
<keyword id="KW-0560">Oxidoreductase</keyword>
<keyword id="KW-1185">Reference proteome</keyword>
<gene>
    <name type="primary">rutA</name>
    <name type="synonym">ycdM</name>
    <name type="ordered locus">b1012</name>
    <name type="ordered locus">JW0997</name>
</gene>